<protein>
    <recommendedName>
        <fullName>Silaffin-1</fullName>
    </recommendedName>
    <alternativeName>
        <fullName>natSil-1</fullName>
    </alternativeName>
    <component>
        <recommendedName>
            <fullName>Silaffin-1B</fullName>
        </recommendedName>
    </component>
    <component>
        <recommendedName>
            <fullName>Silaffin-1A2</fullName>
        </recommendedName>
    </component>
    <component>
        <recommendedName>
            <fullName>Silaffin-1A1</fullName>
        </recommendedName>
    </component>
</protein>
<accession>Q9SE35</accession>
<organism>
    <name type="scientific">Cylindrotheca fusiformis</name>
    <name type="common">Marine diatom</name>
    <dbReference type="NCBI Taxonomy" id="2853"/>
    <lineage>
        <taxon>Eukaryota</taxon>
        <taxon>Sar</taxon>
        <taxon>Stramenopiles</taxon>
        <taxon>Ochrophyta</taxon>
        <taxon>Bacillariophyta</taxon>
        <taxon>Bacillariophyceae</taxon>
        <taxon>Bacillariophycidae</taxon>
        <taxon>Bacillariales</taxon>
        <taxon>Bacillariaceae</taxon>
        <taxon>Cylindrotheca</taxon>
    </lineage>
</organism>
<dbReference type="EMBL" id="AF191634">
    <property type="protein sequence ID" value="AAF16940.1"/>
    <property type="molecule type" value="Genomic_DNA"/>
</dbReference>
<dbReference type="PIR" id="A59141">
    <property type="entry name" value="A59141"/>
</dbReference>
<dbReference type="SMR" id="Q9SE35"/>
<dbReference type="DIP" id="DIP-62079N"/>
<dbReference type="iPTMnet" id="Q9SE35"/>
<dbReference type="GO" id="GO:0031214">
    <property type="term" value="P:biomineral tissue development"/>
    <property type="evidence" value="ECO:0007669"/>
    <property type="project" value="UniProtKB-KW"/>
</dbReference>
<name>SIL1_CYLFU</name>
<evidence type="ECO:0000255" key="1"/>
<evidence type="ECO:0000256" key="2">
    <source>
        <dbReference type="SAM" id="MobiDB-lite"/>
    </source>
</evidence>
<evidence type="ECO:0000269" key="3">
    <source>
    </source>
</evidence>
<evidence type="ECO:0000269" key="4">
    <source>
    </source>
</evidence>
<evidence type="ECO:0000269" key="5">
    <source>
    </source>
</evidence>
<evidence type="ECO:0000269" key="6">
    <source>
    </source>
</evidence>
<evidence type="ECO:0000269" key="7">
    <source>
    </source>
</evidence>
<evidence type="ECO:0000269" key="8">
    <source>
    </source>
</evidence>
<evidence type="ECO:0000305" key="9"/>
<evidence type="ECO:0000305" key="10">
    <source>
    </source>
</evidence>
<proteinExistence type="evidence at protein level"/>
<gene>
    <name type="primary">SIL1</name>
</gene>
<comment type="function">
    <text evidence="3 4 7">Catalyzes the polymerization of silica spheres from a silicilic acid solution. It therefore plays a central role in the formation of silica cell wall of diatoms.</text>
</comment>
<comment type="subunit">
    <text evidence="7">Silaffin-1A peptides form large aggregates via electrostatic interactions due to intermolecular interactions between the negatively charged phosphate groups and the polyamine moieties.</text>
</comment>
<comment type="domain">
    <text>It is unknown whether the acidic chain located at the N-terminus is functional or whether it represents a propeptide.</text>
</comment>
<comment type="PTM">
    <text>N6-polymethylaminopropylated. Two lysine residues of each peptide bears 6 to 11 repeats of methyl-propylamine, which gives a possible template for nucleation, and may also control the silica colloid size within the silica deposition vesicle (SDV).</text>
</comment>
<comment type="PTM">
    <text evidence="7">Phosphorylated. All serine residues of the Silaffin-1A1 peptide are phosphorylated. Only minor amounts of the Silaffin-1A2 peptide are phosphorylated. Phosphorylation is essential for the activity. It may represent a source of anions required for silica formation of diatoms.</text>
</comment>
<comment type="mass spectrometry">
    <molecule>Silaffin-1A1</molecule>
</comment>
<comment type="mass spectrometry">
    <molecule>Silaffin-1A1</molecule>
</comment>
<comment type="mass spectrometry">
    <molecule>Silaffin-1A1</molecule>
</comment>
<comment type="mass spectrometry">
    <molecule>Silaffin-1A1</molecule>
</comment>
<comment type="mass spectrometry">
    <molecule>Silaffin-1A1</molecule>
</comment>
<comment type="mass spectrometry">
    <molecule>Silaffin-1A2</molecule>
</comment>
<comment type="mass spectrometry">
    <molecule>Silaffin-1A2</molecule>
</comment>
<comment type="mass spectrometry">
    <molecule>Silaffin-1A2</molecule>
</comment>
<comment type="mass spectrometry">
    <molecule>Silaffin-1A2</molecule>
</comment>
<comment type="mass spectrometry">
    <molecule>Silaffin-1A2</molecule>
</comment>
<comment type="biotechnology">
    <text evidence="6 8">Due to its ability to synthesize simple silica nanospheres in vitro from silanes at nearly neutral pH and at ambient temperatures and pressures, it is of great interest in nanotechnology. May be of practical use for the fabrication of photonic devices.</text>
</comment>
<comment type="miscellaneous">
    <text>The results of the mass spectrometry differ for the same peptide due to the length of the methyl-propylamine chains that vary from 14 to 18 units for the Silaffin-1A2 peptide (141-158) and from 13 to 17 units for the Silaffin-1A1 peptide (163-177).</text>
</comment>
<comment type="miscellaneous">
    <text>The species-specific pattern of biosilica pattern of diatoms may be generated by polyamines of different chain lengths as well as by a synergistic action of long-chain polyamines and silaffins.</text>
</comment>
<comment type="online information" name="Protein Spotlight">
    <link uri="https://www.proteinspotlight.org/back_issues/043"/>
    <text>Miniature masonry - Issue 43 of February 2004</text>
</comment>
<sequence>MKLTAIFPLLFTAVGYCAAQSIADLAAANLSTEDSKSAQLISADSSDDASDSSVESVDAASSDVSGSSVESVDVSGSSLESVDVSGSSLESVDDSSEDSEEEELRILSSKKSGSYYSYGTKKSGSYSGYSTKKSASRRILSSKKSGSYSGYSTKKSGSRRILSSKKSGSYSGSKGSKRRILSSKKSGSYSGSKGSKRRNLSSKKSGSYSGSKGSKRRILSSKKSGSYSGSKGSKRRNLSSKKSGSYSGSKGSKRRILSGGLRGSM</sequence>
<feature type="signal peptide" evidence="1">
    <location>
        <begin position="1"/>
        <end position="19"/>
    </location>
</feature>
<feature type="propeptide" id="PRO_0000032597" description="Acidic" evidence="3">
    <location>
        <begin position="20"/>
        <end position="107"/>
    </location>
</feature>
<feature type="peptide" id="PRO_0000032598" description="Silaffin-1B" evidence="9">
    <location>
        <begin position="108"/>
        <end position="136"/>
    </location>
</feature>
<feature type="propeptide" id="PRO_0000032599" evidence="9">
    <location>
        <begin position="137"/>
        <end position="140"/>
    </location>
</feature>
<feature type="peptide" id="PRO_0000032600" description="Silaffin-1A2">
    <location>
        <begin position="141"/>
        <end position="158"/>
    </location>
</feature>
<feature type="propeptide" id="PRO_0000032601" evidence="9">
    <location>
        <begin position="159"/>
        <end position="162"/>
    </location>
</feature>
<feature type="peptide" id="PRO_0000032602" description="Silaffin-1A1">
    <location>
        <begin position="163"/>
        <end position="177"/>
    </location>
</feature>
<feature type="propeptide" id="PRO_0000032603" evidence="9">
    <location>
        <begin position="178"/>
        <end position="181"/>
    </location>
</feature>
<feature type="peptide" id="PRO_0000032604" description="Silaffin-1A1">
    <location>
        <begin position="182"/>
        <end position="196"/>
    </location>
</feature>
<feature type="propeptide" id="PRO_0000032605" evidence="9">
    <location>
        <begin position="197"/>
        <end position="200"/>
    </location>
</feature>
<feature type="peptide" id="PRO_0000032606" description="Silaffin-1A1">
    <location>
        <begin position="201"/>
        <end position="215"/>
    </location>
</feature>
<feature type="propeptide" id="PRO_0000032607" evidence="9">
    <location>
        <begin position="216"/>
        <end position="219"/>
    </location>
</feature>
<feature type="peptide" id="PRO_0000032608" description="Silaffin-1A1">
    <location>
        <begin position="220"/>
        <end position="234"/>
    </location>
</feature>
<feature type="propeptide" id="PRO_0000032609" evidence="9">
    <location>
        <begin position="235"/>
        <end position="238"/>
    </location>
</feature>
<feature type="peptide" id="PRO_0000032610" description="Silaffin-1A1">
    <location>
        <begin position="239"/>
        <end position="253"/>
    </location>
</feature>
<feature type="propeptide" id="PRO_0000032611" evidence="9">
    <location>
        <begin position="254"/>
        <end position="265"/>
    </location>
</feature>
<feature type="repeat" description="R1; atypical">
    <location>
        <begin position="108"/>
        <end position="140"/>
    </location>
</feature>
<feature type="repeat" description="R2; atypical">
    <location>
        <begin position="141"/>
        <end position="162"/>
    </location>
</feature>
<feature type="repeat" description="R3">
    <location>
        <begin position="163"/>
        <end position="181"/>
    </location>
</feature>
<feature type="repeat" description="R4">
    <location>
        <begin position="182"/>
        <end position="200"/>
    </location>
</feature>
<feature type="repeat" description="R5">
    <location>
        <begin position="201"/>
        <end position="219"/>
    </location>
</feature>
<feature type="repeat" description="R6">
    <location>
        <begin position="220"/>
        <end position="238"/>
    </location>
</feature>
<feature type="repeat" description="R7">
    <location>
        <begin position="239"/>
        <end position="257"/>
    </location>
</feature>
<feature type="region of interest" description="Disordered" evidence="2">
    <location>
        <begin position="37"/>
        <end position="106"/>
    </location>
</feature>
<feature type="region of interest" description="7 X 19 AA repeat of S-S-K-K-S-G-S-Y-S-G-S-K-G-S-K-R-R-[IL]-L">
    <location>
        <begin position="108"/>
        <end position="257"/>
    </location>
</feature>
<feature type="region of interest" description="Disordered" evidence="2">
    <location>
        <begin position="122"/>
        <end position="265"/>
    </location>
</feature>
<feature type="compositionally biased region" description="Low complexity" evidence="2">
    <location>
        <begin position="51"/>
        <end position="90"/>
    </location>
</feature>
<feature type="compositionally biased region" description="Acidic residues" evidence="2">
    <location>
        <begin position="91"/>
        <end position="103"/>
    </location>
</feature>
<feature type="compositionally biased region" description="Low complexity" evidence="2">
    <location>
        <begin position="122"/>
        <end position="133"/>
    </location>
</feature>
<feature type="compositionally biased region" description="Low complexity" evidence="2">
    <location>
        <begin position="142"/>
        <end position="155"/>
    </location>
</feature>
<feature type="compositionally biased region" description="Low complexity" evidence="2">
    <location>
        <begin position="164"/>
        <end position="174"/>
    </location>
</feature>
<feature type="compositionally biased region" description="Low complexity" evidence="2">
    <location>
        <begin position="183"/>
        <end position="193"/>
    </location>
</feature>
<feature type="compositionally biased region" description="Low complexity" evidence="2">
    <location>
        <begin position="202"/>
        <end position="212"/>
    </location>
</feature>
<feature type="compositionally biased region" description="Low complexity" evidence="2">
    <location>
        <begin position="221"/>
        <end position="231"/>
    </location>
</feature>
<feature type="compositionally biased region" description="Low complexity" evidence="2">
    <location>
        <begin position="240"/>
        <end position="250"/>
    </location>
</feature>
<feature type="modified residue" description="N6-poly(methylaminopropyl)lysine" evidence="10">
    <location>
        <position position="110"/>
    </location>
</feature>
<feature type="modified residue" description="N6,N6-dimethyllysine" evidence="10">
    <location>
        <position position="111"/>
    </location>
</feature>
<feature type="modified residue" description="N6-poly(methylaminopropyl)lysine" evidence="3 5">
    <location>
        <position position="143"/>
    </location>
</feature>
<feature type="modified residue" description="N6,N6-dimethyllysine" evidence="3 5">
    <location>
        <position position="144"/>
    </location>
</feature>
<feature type="modified residue" description="N6-poly(methylaminopropyl)lysine" evidence="5">
    <location>
        <position position="154"/>
    </location>
</feature>
<feature type="modified residue" description="N6,N6-dimethyllysine" evidence="5">
    <location>
        <position position="155"/>
    </location>
</feature>
<feature type="modified residue" description="Phosphoserine" evidence="7">
    <location>
        <position position="163"/>
    </location>
</feature>
<feature type="modified residue" description="Phosphoserine" evidence="7">
    <location>
        <position position="164"/>
    </location>
</feature>
<feature type="modified residue" description="N6-poly(methylaminopropyl)lysine" evidence="3 5">
    <location>
        <position position="165"/>
    </location>
</feature>
<feature type="modified residue" description="N6,N6-dimethyllysine" evidence="3 5">
    <location>
        <position position="166"/>
    </location>
</feature>
<feature type="modified residue" description="Phosphoserine" evidence="7">
    <location>
        <position position="167"/>
    </location>
</feature>
<feature type="modified residue" description="Phosphoserine" evidence="7">
    <location>
        <position position="169"/>
    </location>
</feature>
<feature type="modified residue" description="Phosphoserine" evidence="7">
    <location>
        <position position="171"/>
    </location>
</feature>
<feature type="modified residue" description="Phosphoserine" evidence="7">
    <location>
        <position position="173"/>
    </location>
</feature>
<feature type="modified residue" description="N6,N6,N6-trimethyl-5-hydroxylysine" evidence="5 7">
    <location>
        <position position="174"/>
    </location>
</feature>
<feature type="modified residue" description="Phosphoserine" evidence="7">
    <location>
        <position position="176"/>
    </location>
</feature>
<feature type="modified residue" description="N6-poly(methylaminopropyl)lysine" evidence="5">
    <location>
        <position position="177"/>
    </location>
</feature>
<feature type="modified residue" description="Phosphoserine" evidence="7">
    <location>
        <position position="182"/>
    </location>
</feature>
<feature type="modified residue" description="Phosphoserine" evidence="7">
    <location>
        <position position="183"/>
    </location>
</feature>
<feature type="modified residue" description="N6-poly(methylaminopropyl)lysine" evidence="3 5">
    <location>
        <position position="184"/>
    </location>
</feature>
<feature type="modified residue" description="N6,N6-dimethyllysine" evidence="3 5">
    <location>
        <position position="185"/>
    </location>
</feature>
<feature type="modified residue" description="Phosphoserine" evidence="7">
    <location>
        <position position="186"/>
    </location>
</feature>
<feature type="modified residue" description="Phosphoserine" evidence="7">
    <location>
        <position position="188"/>
    </location>
</feature>
<feature type="modified residue" description="Phosphoserine" evidence="7">
    <location>
        <position position="190"/>
    </location>
</feature>
<feature type="modified residue" description="Phosphoserine" evidence="7">
    <location>
        <position position="192"/>
    </location>
</feature>
<feature type="modified residue" description="N6,N6,N6-trimethyl-5-hydroxylysine" evidence="5 7">
    <location>
        <position position="193"/>
    </location>
</feature>
<feature type="modified residue" description="Phosphoserine" evidence="7">
    <location>
        <position position="195"/>
    </location>
</feature>
<feature type="modified residue" description="N6-poly(methylaminopropyl)lysine" evidence="5">
    <location>
        <position position="196"/>
    </location>
</feature>
<feature type="modified residue" description="Phosphoserine" evidence="7">
    <location>
        <position position="201"/>
    </location>
</feature>
<feature type="modified residue" description="Phosphoserine" evidence="7">
    <location>
        <position position="202"/>
    </location>
</feature>
<feature type="modified residue" description="N6-poly(methylaminopropyl)lysine" evidence="3 5">
    <location>
        <position position="203"/>
    </location>
</feature>
<feature type="modified residue" description="N6,N6-dimethyllysine" evidence="3 5">
    <location>
        <position position="204"/>
    </location>
</feature>
<feature type="modified residue" description="Phosphoserine" evidence="7">
    <location>
        <position position="205"/>
    </location>
</feature>
<feature type="modified residue" description="Phosphoserine" evidence="7">
    <location>
        <position position="207"/>
    </location>
</feature>
<feature type="modified residue" description="Phosphoserine" evidence="7">
    <location>
        <position position="209"/>
    </location>
</feature>
<feature type="modified residue" description="Phosphoserine" evidence="7">
    <location>
        <position position="211"/>
    </location>
</feature>
<feature type="modified residue" description="N6,N6,N6-trimethyl-5-hydroxylysine" evidence="5 7">
    <location>
        <position position="212"/>
    </location>
</feature>
<feature type="modified residue" description="Phosphoserine" evidence="7">
    <location>
        <position position="214"/>
    </location>
</feature>
<feature type="modified residue" description="N6-poly(methylaminopropyl)lysine" evidence="5">
    <location>
        <position position="215"/>
    </location>
</feature>
<feature type="modified residue" description="Phosphoserine" evidence="7">
    <location>
        <position position="220"/>
    </location>
</feature>
<feature type="modified residue" description="Phosphoserine" evidence="7">
    <location>
        <position position="221"/>
    </location>
</feature>
<feature type="modified residue" description="N6-poly(methylaminopropyl)lysine" evidence="3 5">
    <location>
        <position position="222"/>
    </location>
</feature>
<feature type="modified residue" description="N6,N6-dimethyllysine" evidence="3 5">
    <location>
        <position position="223"/>
    </location>
</feature>
<feature type="modified residue" description="Phosphoserine" evidence="7">
    <location>
        <position position="224"/>
    </location>
</feature>
<feature type="modified residue" description="Phosphoserine" evidence="7">
    <location>
        <position position="226"/>
    </location>
</feature>
<feature type="modified residue" description="Phosphoserine" evidence="7">
    <location>
        <position position="228"/>
    </location>
</feature>
<feature type="modified residue" description="Phosphoserine" evidence="7">
    <location>
        <position position="230"/>
    </location>
</feature>
<feature type="modified residue" description="N6,N6,N6-trimethyl-5-hydroxylysine" evidence="5 7">
    <location>
        <position position="231"/>
    </location>
</feature>
<feature type="modified residue" description="Phosphoserine" evidence="7">
    <location>
        <position position="233"/>
    </location>
</feature>
<feature type="modified residue" description="N6-poly(methylaminopropyl)lysine" evidence="5">
    <location>
        <position position="234"/>
    </location>
</feature>
<feature type="modified residue" description="Phosphoserine" evidence="7">
    <location>
        <position position="239"/>
    </location>
</feature>
<feature type="modified residue" description="Phosphoserine" evidence="7">
    <location>
        <position position="240"/>
    </location>
</feature>
<feature type="modified residue" description="N6-poly(methylaminopropyl)lysine" evidence="3 5">
    <location>
        <position position="241"/>
    </location>
</feature>
<feature type="modified residue" description="N6,N6-dimethyllysine" evidence="3 5">
    <location>
        <position position="242"/>
    </location>
</feature>
<feature type="modified residue" description="Phosphoserine" evidence="7">
    <location>
        <position position="243"/>
    </location>
</feature>
<feature type="modified residue" description="Phosphoserine" evidence="7">
    <location>
        <position position="245"/>
    </location>
</feature>
<feature type="modified residue" description="Phosphoserine" evidence="7">
    <location>
        <position position="247"/>
    </location>
</feature>
<feature type="modified residue" description="Phosphoserine" evidence="7">
    <location>
        <position position="249"/>
    </location>
</feature>
<feature type="modified residue" description="N6,N6,N6-trimethyl-5-hydroxylysine" evidence="5 7">
    <location>
        <position position="250"/>
    </location>
</feature>
<feature type="modified residue" description="Phosphoserine" evidence="7">
    <location>
        <position position="252"/>
    </location>
</feature>
<feature type="modified residue" description="N6-poly(methylaminopropyl)lysine" evidence="5">
    <location>
        <position position="253"/>
    </location>
</feature>
<reference key="1">
    <citation type="journal article" date="1999" name="Science">
        <title>Polycationic peptides from diatom biosilica that direct silica nanosphere formation.</title>
        <authorList>
            <person name="Kroeger N."/>
            <person name="Deutzmann R."/>
            <person name="Sumper M."/>
        </authorList>
    </citation>
    <scope>NUCLEOTIDE SEQUENCE [GENOMIC DNA]</scope>
    <scope>PROTEIN SEQUENCE OF 108-120; 141-151 AND 163-173</scope>
    <scope>FUNCTION</scope>
    <scope>METHYLATION AT LYS-144 AND LYS-166</scope>
    <scope>METHYLAMINOPROPYLATION AT LYS-143 AND LYS-165</scope>
</reference>
<reference key="2">
    <citation type="journal article" date="2001" name="J. Biol. Chem.">
        <title>Silica-precipitating peptides from diatoms. The chemical structure of silaffin-A from Cylindrotheca fusiformis.</title>
        <authorList>
            <person name="Kroeger N."/>
            <person name="Deutzmann R."/>
            <person name="Sumper M."/>
        </authorList>
    </citation>
    <scope>PROTEIN SEQUENCE OF 141-158 AND 163-177</scope>
    <scope>MASS SPECTROMETRY</scope>
    <scope>METHYLATION AT LYS-111; LYS-144; LYS-155; LYS-166; LYS-185; LYS-204; LYS-223 AND LYS-242</scope>
    <scope>METHYLAMINOPROPYLATION AT LYS-110; LYS-143; LYS-154; LYS-165; LYS-177; LYS-184; LYS-196; LYS-203; LYS-215; LYS-222; LYS-234; LYS-241 AND LYS-253</scope>
    <scope>METHYLHYDROXYLATION AT LYS-174; LYS-193; LYS-212; LYS-231 AND LYS-250</scope>
</reference>
<reference key="3">
    <citation type="journal article" date="2000" name="Proc. Natl. Acad. Sci. U.S.A.">
        <title>Species-specific polyamines from diatoms control silica morphology.</title>
        <authorList>
            <person name="Kroeger N."/>
            <person name="Deutzmann R."/>
            <person name="Bergsdorf C."/>
            <person name="Sumper M."/>
        </authorList>
    </citation>
    <scope>FUNCTION</scope>
</reference>
<reference key="4">
    <citation type="journal article" date="2002" name="Science">
        <title>Self-assembly of highly phosphorylated silaffins and their function in biosilica morphogenesis.</title>
        <authorList>
            <person name="Kroeger N."/>
            <person name="Lorenz S."/>
            <person name="Brunner E."/>
            <person name="Sumper M."/>
        </authorList>
    </citation>
    <scope>FUNCTION</scope>
    <scope>SUBUNIT</scope>
    <scope>PHOSPHORYLATION AT SER-163; SER-164; SER-167; SER-169; SER-171; SER-173; SER-176; SER-182; SER-183; SER-186; SER-188; SER-190; SER-192; SER-195; SER-201; SER-202; SER-205; SER-207; SER-209; SER-211; SER-214; SER-220; SER-221; SER-224; SER-226; SER-228; SER-230; SER-233; SER-239; SER-240; SER-243; SER-245; SER-247; SER-249 AND SER-252</scope>
    <scope>METHYLHYDROXYLATION AT LYS-174; LYS-193; LYS-212; LYS-231 AND LYS-250</scope>
</reference>
<reference key="5">
    <citation type="journal article" date="2001" name="Nature">
        <title>Ultrafast holographic nanopatterning of biocatalytically formed silica.</title>
        <authorList>
            <person name="Brott L.L."/>
            <person name="Naik R.R."/>
            <person name="Pikas D.J."/>
            <person name="Kirkpatrick S.M."/>
            <person name="Tomlin D.W."/>
            <person name="Whitlock P.W."/>
            <person name="Clarson S.J."/>
            <person name="Stone M.O."/>
        </authorList>
    </citation>
    <scope>BIOTECHNOLOGICAL RELEVANCE</scope>
</reference>
<reference key="6">
    <citation type="journal article" date="2004" name="Nat. Biotechnol.">
        <title>Enzyme immobilization in a biomimetic silica support.</title>
        <authorList>
            <person name="Luckarift H.R."/>
            <person name="Spain J.C."/>
            <person name="Naik R.R."/>
            <person name="Stone M.O."/>
        </authorList>
    </citation>
    <scope>BIOTECHNOLOGICAL RELEVANCE</scope>
</reference>
<keyword id="KW-0091">Biomineralization</keyword>
<keyword id="KW-0165">Cleavage on pair of basic residues</keyword>
<keyword id="KW-0903">Direct protein sequencing</keyword>
<keyword id="KW-0379">Hydroxylation</keyword>
<keyword id="KW-0488">Methylation</keyword>
<keyword id="KW-0597">Phosphoprotein</keyword>
<keyword id="KW-0677">Repeat</keyword>
<keyword id="KW-0732">Signal</keyword>